<reference key="1">
    <citation type="submission" date="2005-08" db="EMBL/GenBank/DDBJ databases">
        <authorList>
            <consortium name="NIH - Mammalian Gene Collection (MGC) project"/>
        </authorList>
    </citation>
    <scope>NUCLEOTIDE SEQUENCE [LARGE SCALE MRNA]</scope>
    <source>
        <strain>Crossbred X Angus</strain>
        <tissue>Ileum</tissue>
    </source>
</reference>
<feature type="chain" id="PRO_0000303150" description="Mediator of RNA polymerase II transcription subunit 10">
    <location>
        <begin position="1"/>
        <end position="135"/>
    </location>
</feature>
<organism>
    <name type="scientific">Bos taurus</name>
    <name type="common">Bovine</name>
    <dbReference type="NCBI Taxonomy" id="9913"/>
    <lineage>
        <taxon>Eukaryota</taxon>
        <taxon>Metazoa</taxon>
        <taxon>Chordata</taxon>
        <taxon>Craniata</taxon>
        <taxon>Vertebrata</taxon>
        <taxon>Euteleostomi</taxon>
        <taxon>Mammalia</taxon>
        <taxon>Eutheria</taxon>
        <taxon>Laurasiatheria</taxon>
        <taxon>Artiodactyla</taxon>
        <taxon>Ruminantia</taxon>
        <taxon>Pecora</taxon>
        <taxon>Bovidae</taxon>
        <taxon>Bovinae</taxon>
        <taxon>Bos</taxon>
    </lineage>
</organism>
<name>MED10_BOVIN</name>
<gene>
    <name type="primary">MED10</name>
</gene>
<proteinExistence type="evidence at transcript level"/>
<protein>
    <recommendedName>
        <fullName>Mediator of RNA polymerase II transcription subunit 10</fullName>
    </recommendedName>
    <alternativeName>
        <fullName>Mediator complex subunit 10</fullName>
    </alternativeName>
</protein>
<dbReference type="EMBL" id="BC102439">
    <property type="protein sequence ID" value="AAI02440.1"/>
    <property type="molecule type" value="mRNA"/>
</dbReference>
<dbReference type="RefSeq" id="NP_001029928.1">
    <property type="nucleotide sequence ID" value="NM_001034756.2"/>
</dbReference>
<dbReference type="SMR" id="Q3ZCF2"/>
<dbReference type="FunCoup" id="Q3ZCF2">
    <property type="interactions" value="3093"/>
</dbReference>
<dbReference type="STRING" id="9913.ENSBTAP00000010690"/>
<dbReference type="PaxDb" id="9913-ENSBTAP00000010690"/>
<dbReference type="Ensembl" id="ENSBTAT00000010690.6">
    <property type="protein sequence ID" value="ENSBTAP00000010690.4"/>
    <property type="gene ID" value="ENSBTAG00000008130.6"/>
</dbReference>
<dbReference type="GeneID" id="614276"/>
<dbReference type="KEGG" id="bta:614276"/>
<dbReference type="CTD" id="84246"/>
<dbReference type="VEuPathDB" id="HostDB:ENSBTAG00000008130"/>
<dbReference type="VGNC" id="VGNC:31347">
    <property type="gene designation" value="MED10"/>
</dbReference>
<dbReference type="eggNOG" id="KOG3046">
    <property type="taxonomic scope" value="Eukaryota"/>
</dbReference>
<dbReference type="GeneTree" id="ENSGT00390000014501"/>
<dbReference type="HOGENOM" id="CLU_096169_3_0_1"/>
<dbReference type="InParanoid" id="Q3ZCF2"/>
<dbReference type="OMA" id="QYQRAKM"/>
<dbReference type="OrthoDB" id="337270at2759"/>
<dbReference type="TreeFam" id="TF315096"/>
<dbReference type="Reactome" id="R-BTA-212436">
    <property type="pathway name" value="Generic Transcription Pathway"/>
</dbReference>
<dbReference type="Reactome" id="R-BTA-9841922">
    <property type="pathway name" value="MLL4 and MLL3 complexes regulate expression of PPARG target genes in adipogenesis and hepatic steatosis"/>
</dbReference>
<dbReference type="Proteomes" id="UP000009136">
    <property type="component" value="Chromosome 20"/>
</dbReference>
<dbReference type="Bgee" id="ENSBTAG00000008130">
    <property type="expression patterns" value="Expressed in oocyte and 105 other cell types or tissues"/>
</dbReference>
<dbReference type="GO" id="GO:0070847">
    <property type="term" value="C:core mediator complex"/>
    <property type="evidence" value="ECO:0007669"/>
    <property type="project" value="Ensembl"/>
</dbReference>
<dbReference type="GO" id="GO:0016592">
    <property type="term" value="C:mediator complex"/>
    <property type="evidence" value="ECO:0007669"/>
    <property type="project" value="Ensembl"/>
</dbReference>
<dbReference type="GO" id="GO:0005654">
    <property type="term" value="C:nucleoplasm"/>
    <property type="evidence" value="ECO:0007669"/>
    <property type="project" value="Ensembl"/>
</dbReference>
<dbReference type="GO" id="GO:0003712">
    <property type="term" value="F:transcription coregulator activity"/>
    <property type="evidence" value="ECO:0007669"/>
    <property type="project" value="InterPro"/>
</dbReference>
<dbReference type="GO" id="GO:0045944">
    <property type="term" value="P:positive regulation of transcription by RNA polymerase II"/>
    <property type="evidence" value="ECO:0007669"/>
    <property type="project" value="Ensembl"/>
</dbReference>
<dbReference type="GO" id="GO:0035019">
    <property type="term" value="P:somatic stem cell population maintenance"/>
    <property type="evidence" value="ECO:0007669"/>
    <property type="project" value="Ensembl"/>
</dbReference>
<dbReference type="InterPro" id="IPR019145">
    <property type="entry name" value="Mediator_Med10"/>
</dbReference>
<dbReference type="PANTHER" id="PTHR13345">
    <property type="entry name" value="MEDIATOR OF RNA POLYMERASE II TRANSCRIPTION SUBUNIT 10"/>
    <property type="match status" value="1"/>
</dbReference>
<dbReference type="PANTHER" id="PTHR13345:SF13">
    <property type="entry name" value="MEDIATOR OF RNA POLYMERASE II TRANSCRIPTION SUBUNIT 10"/>
    <property type="match status" value="1"/>
</dbReference>
<dbReference type="Pfam" id="PF09748">
    <property type="entry name" value="Med10"/>
    <property type="match status" value="1"/>
</dbReference>
<evidence type="ECO:0000250" key="1"/>
<evidence type="ECO:0000305" key="2"/>
<keyword id="KW-0010">Activator</keyword>
<keyword id="KW-0539">Nucleus</keyword>
<keyword id="KW-1185">Reference proteome</keyword>
<keyword id="KW-0804">Transcription</keyword>
<keyword id="KW-0805">Transcription regulation</keyword>
<comment type="function">
    <text evidence="1">Component of the Mediator complex, a coactivator involved in the regulated transcription of nearly all RNA polymerase II-dependent genes. Mediator functions as a bridge to convey information from gene-specific regulatory proteins to the basal RNA polymerase II transcription machinery. Mediator is recruited to promoters by direct interactions with regulatory proteins and serves as a scaffold for the assembly of a functional preinitiation complex with RNA polymerase II and the general transcription factors (By similarity).</text>
</comment>
<comment type="subunit">
    <text evidence="1">Component of the Mediator complex, which is composed of MED1, MED4, MED6, MED7, MED8, MED9, MED10, MED11, MED12, MED13, MED13L, MED14, MED15, MED16, MED17, MED18, MED19, MED20, MED21, MED22, MED23, MED24, MED25, MED26, MED27, MED29, MED30, MED31, CCNC, CDK8 and CDC2L6/CDK11. The MED12, MED13, CCNC and CDK8 subunits form a distinct module termed the CDK8 module. Mediator containing the CDK8 module is less active than Mediator lacking this module in supporting transcriptional activation. Individual preparations of the Mediator complex lacking one or more distinct subunits have been variously termed ARC, CRSP, DRIP, PC2, SMCC and TRAP (By similarity).</text>
</comment>
<comment type="subcellular location">
    <subcellularLocation>
        <location evidence="2">Nucleus</location>
    </subcellularLocation>
</comment>
<comment type="similarity">
    <text evidence="2">Belongs to the Mediator complex subunit 10 family.</text>
</comment>
<accession>Q3ZCF2</accession>
<sequence length="135" mass="15688">MAEKFDHLEEHLEKFVENIRQLGIIVSDFQPSSQAGLNQKLNFIVTGLQDIDKCRQQLHDITVPLEVFEYIDQGRNPQLYTKECLERALAKNEQVKGKIDTMKKFKSLLIQELSKVFPEDMAKYRSIRGEDHPPS</sequence>